<sequence>MTAAQAAGEEAPPGVRSVKVVLVGDGGCGKTSLLMVFADGAFPESYTPTVFERYMVNLQVKGKPVHLHIWDTAGQDDYDRLRPLFYPDASVLLLCFDVTSPNSFDNIFNRWYPEVNHFCKKVPIIVVGCKTDLRKDKSLVNKLRRNGLEPVTYHRGQEMARSVGAVAYLECSARLHDNVHAVFQEAAEVALSSRGRNFWRRITQGFCVVT</sequence>
<feature type="chain" id="PRO_0000198863" description="Rho-related GTP-binding protein RhoD">
    <location>
        <begin position="1"/>
        <end position="207"/>
    </location>
</feature>
<feature type="propeptide" id="PRO_0000223365" description="Removed in mature form" evidence="1">
    <location>
        <begin position="208"/>
        <end position="210"/>
    </location>
</feature>
<feature type="short sequence motif" description="Effector region" evidence="3">
    <location>
        <begin position="46"/>
        <end position="54"/>
    </location>
</feature>
<feature type="binding site" evidence="1">
    <location>
        <begin position="24"/>
        <end position="31"/>
    </location>
    <ligand>
        <name>GTP</name>
        <dbReference type="ChEBI" id="CHEBI:37565"/>
    </ligand>
</feature>
<feature type="binding site" evidence="1">
    <location>
        <begin position="71"/>
        <end position="75"/>
    </location>
    <ligand>
        <name>GTP</name>
        <dbReference type="ChEBI" id="CHEBI:37565"/>
    </ligand>
</feature>
<feature type="binding site" evidence="1">
    <location>
        <begin position="129"/>
        <end position="132"/>
    </location>
    <ligand>
        <name>GTP</name>
        <dbReference type="ChEBI" id="CHEBI:37565"/>
    </ligand>
</feature>
<feature type="modified residue" description="Cysteine methyl ester" evidence="1">
    <location>
        <position position="207"/>
    </location>
</feature>
<feature type="lipid moiety-binding region" description="S-geranylgeranyl cysteine" evidence="1">
    <location>
        <position position="207"/>
    </location>
</feature>
<feature type="sequence variant" id="VAR_058408" description="In dbSNP:rs4930409.">
    <original>R</original>
    <variation>C</variation>
    <location>
        <position position="134"/>
    </location>
</feature>
<feature type="mutagenesis site" description="Abolishes endosomal localization." evidence="7">
    <original>C</original>
    <variation>S</variation>
    <location>
        <position position="207"/>
    </location>
</feature>
<feature type="strand" evidence="11">
    <location>
        <begin position="17"/>
        <end position="24"/>
    </location>
</feature>
<feature type="helix" evidence="11">
    <location>
        <begin position="30"/>
        <end position="38"/>
    </location>
</feature>
<feature type="strand" evidence="11">
    <location>
        <begin position="52"/>
        <end position="60"/>
    </location>
</feature>
<feature type="strand" evidence="11">
    <location>
        <begin position="63"/>
        <end position="71"/>
    </location>
</feature>
<feature type="helix" evidence="12">
    <location>
        <begin position="76"/>
        <end position="78"/>
    </location>
</feature>
<feature type="turn" evidence="12">
    <location>
        <begin position="79"/>
        <end position="81"/>
    </location>
</feature>
<feature type="helix" evidence="12">
    <location>
        <begin position="82"/>
        <end position="85"/>
    </location>
</feature>
<feature type="strand" evidence="11">
    <location>
        <begin position="89"/>
        <end position="97"/>
    </location>
</feature>
<feature type="helix" evidence="11">
    <location>
        <begin position="101"/>
        <end position="109"/>
    </location>
</feature>
<feature type="helix" evidence="11">
    <location>
        <begin position="111"/>
        <end position="118"/>
    </location>
</feature>
<feature type="strand" evidence="12">
    <location>
        <begin position="120"/>
        <end position="122"/>
    </location>
</feature>
<feature type="strand" evidence="11">
    <location>
        <begin position="124"/>
        <end position="129"/>
    </location>
</feature>
<feature type="helix" evidence="11">
    <location>
        <begin position="131"/>
        <end position="134"/>
    </location>
</feature>
<feature type="helix" evidence="11">
    <location>
        <begin position="137"/>
        <end position="145"/>
    </location>
</feature>
<feature type="helix" evidence="11">
    <location>
        <begin position="153"/>
        <end position="162"/>
    </location>
</feature>
<feature type="strand" evidence="11">
    <location>
        <begin position="166"/>
        <end position="170"/>
    </location>
</feature>
<feature type="turn" evidence="11">
    <location>
        <begin position="173"/>
        <end position="176"/>
    </location>
</feature>
<feature type="helix" evidence="11">
    <location>
        <begin position="179"/>
        <end position="192"/>
    </location>
</feature>
<gene>
    <name evidence="10" type="primary">RHOD</name>
    <name type="synonym">ARHD</name>
</gene>
<accession>O00212</accession>
<name>RHOD_HUMAN</name>
<proteinExistence type="evidence at protein level"/>
<protein>
    <recommendedName>
        <fullName evidence="9">Rho-related GTP-binding protein RhoD</fullName>
    </recommendedName>
    <alternativeName>
        <fullName>Rho-related protein HP1</fullName>
        <shortName>RhoHP1</shortName>
    </alternativeName>
</protein>
<keyword id="KW-0002">3D-structure</keyword>
<keyword id="KW-1003">Cell membrane</keyword>
<keyword id="KW-0967">Endosome</keyword>
<keyword id="KW-0342">GTP-binding</keyword>
<keyword id="KW-0449">Lipoprotein</keyword>
<keyword id="KW-0472">Membrane</keyword>
<keyword id="KW-0488">Methylation</keyword>
<keyword id="KW-0547">Nucleotide-binding</keyword>
<keyword id="KW-0636">Prenylation</keyword>
<keyword id="KW-1267">Proteomics identification</keyword>
<keyword id="KW-1185">Reference proteome</keyword>
<organism>
    <name type="scientific">Homo sapiens</name>
    <name type="common">Human</name>
    <dbReference type="NCBI Taxonomy" id="9606"/>
    <lineage>
        <taxon>Eukaryota</taxon>
        <taxon>Metazoa</taxon>
        <taxon>Chordata</taxon>
        <taxon>Craniata</taxon>
        <taxon>Vertebrata</taxon>
        <taxon>Euteleostomi</taxon>
        <taxon>Mammalia</taxon>
        <taxon>Eutheria</taxon>
        <taxon>Euarchontoglires</taxon>
        <taxon>Primates</taxon>
        <taxon>Haplorrhini</taxon>
        <taxon>Catarrhini</taxon>
        <taxon>Hominidae</taxon>
        <taxon>Homo</taxon>
    </lineage>
</organism>
<comment type="function">
    <text evidence="6 7 8">Involved in endosome dynamics. May coordinate membrane transport with the function of the cytoskeleton. Involved in the internalization and trafficking of activated tyrosine kinase receptors such as PDGFRB. Participates in the reorganization of actin cytoskeleton; the function seems to involve WHAMM and includes regulation of filopodia formation and actin filament bundling. Can modulate the effect of DAPK3 in reorganization of actin cytoskeleton and focal adhesion dissolution.</text>
</comment>
<comment type="subunit">
    <text evidence="4 5 6 7 8">Interacts (in GTP-bound form) with DIAPH2 isoform 3, DAPK3, FILIP1 and WHAMM. Interacts with PAK5. Interacts (independent of GTP-loaded status) with ANKFY1.</text>
</comment>
<comment type="interaction">
    <interactant intactId="EBI-3918631">
        <id>O00212</id>
    </interactant>
    <interactant intactId="EBI-2817289">
        <id>Q9Y4D1</id>
        <label>DAAM1</label>
    </interactant>
    <organismsDiffer>false</organismsDiffer>
    <experiments>3</experiments>
</comment>
<comment type="interaction">
    <interactant intactId="EBI-3918631">
        <id>O00212</id>
    </interactant>
    <interactant intactId="EBI-3959709">
        <id>O60610</id>
        <label>DIAPH1</label>
    </interactant>
    <organismsDiffer>false</organismsDiffer>
    <experiments>2</experiments>
</comment>
<comment type="subcellular location">
    <subcellularLocation>
        <location evidence="9">Cell membrane</location>
        <topology evidence="9">Lipid-anchor</topology>
        <orientation evidence="9">Cytoplasmic side</orientation>
    </subcellularLocation>
    <subcellularLocation>
        <location evidence="8">Early endosome</location>
    </subcellularLocation>
    <text evidence="2">Colocalizes with RAB5 to early endosomes (By similarity).</text>
</comment>
<comment type="tissue specificity">
    <text>Heart, placenta, liver, skeletal muscle, and pancreas and, with weaker intensity, in several other tissues.</text>
</comment>
<comment type="similarity">
    <text evidence="9">Belongs to the small GTPase superfamily. Rho family.</text>
</comment>
<reference key="1">
    <citation type="journal article" date="1997" name="Biochim. Biophys. Acta">
        <title>Isolation of a novel human cDNA (rhoHP1) homologous to rho genes.</title>
        <authorList>
            <person name="Shimizu F."/>
            <person name="Watanabe T.K."/>
            <person name="Okuno S."/>
            <person name="Omori Y."/>
            <person name="Fujiwara T."/>
            <person name="Takahashi E."/>
            <person name="Nakamura Y."/>
        </authorList>
    </citation>
    <scope>NUCLEOTIDE SEQUENCE [GENOMIC DNA]</scope>
    <source>
        <tissue>Placenta</tissue>
    </source>
</reference>
<reference key="2">
    <citation type="submission" date="2002-04" db="EMBL/GenBank/DDBJ databases">
        <title>cDNA clones of human proteins involved in signal transduction sequenced by the Guthrie cDNA resource center (www.cdna.org).</title>
        <authorList>
            <person name="Puhl H.L. III"/>
            <person name="Ikeda S.R."/>
            <person name="Aronstam R.S."/>
        </authorList>
    </citation>
    <scope>NUCLEOTIDE SEQUENCE [LARGE SCALE MRNA]</scope>
</reference>
<reference key="3">
    <citation type="journal article" date="2006" name="Nature">
        <title>Human chromosome 11 DNA sequence and analysis including novel gene identification.</title>
        <authorList>
            <person name="Taylor T.D."/>
            <person name="Noguchi H."/>
            <person name="Totoki Y."/>
            <person name="Toyoda A."/>
            <person name="Kuroki Y."/>
            <person name="Dewar K."/>
            <person name="Lloyd C."/>
            <person name="Itoh T."/>
            <person name="Takeda T."/>
            <person name="Kim D.-W."/>
            <person name="She X."/>
            <person name="Barlow K.F."/>
            <person name="Bloom T."/>
            <person name="Bruford E."/>
            <person name="Chang J.L."/>
            <person name="Cuomo C.A."/>
            <person name="Eichler E."/>
            <person name="FitzGerald M.G."/>
            <person name="Jaffe D.B."/>
            <person name="LaButti K."/>
            <person name="Nicol R."/>
            <person name="Park H.-S."/>
            <person name="Seaman C."/>
            <person name="Sougnez C."/>
            <person name="Yang X."/>
            <person name="Zimmer A.R."/>
            <person name="Zody M.C."/>
            <person name="Birren B.W."/>
            <person name="Nusbaum C."/>
            <person name="Fujiyama A."/>
            <person name="Hattori M."/>
            <person name="Rogers J."/>
            <person name="Lander E.S."/>
            <person name="Sakaki Y."/>
        </authorList>
    </citation>
    <scope>NUCLEOTIDE SEQUENCE [LARGE SCALE GENOMIC DNA]</scope>
</reference>
<reference key="4">
    <citation type="journal article" date="2004" name="Genome Res.">
        <title>The status, quality, and expansion of the NIH full-length cDNA project: the Mammalian Gene Collection (MGC).</title>
        <authorList>
            <consortium name="The MGC Project Team"/>
        </authorList>
    </citation>
    <scope>NUCLEOTIDE SEQUENCE [LARGE SCALE MRNA]</scope>
    <source>
        <tissue>Cervix</tissue>
    </source>
</reference>
<reference key="5">
    <citation type="journal article" date="2003" name="Nat. Cell Biol.">
        <title>RhoD regulates endosome dynamics through diaphanous-related formin and Src tyrosine kinase.</title>
        <authorList>
            <person name="Gasman S."/>
            <person name="Kalaidzidis Y."/>
            <person name="Zerial M."/>
        </authorList>
    </citation>
    <scope>INTERACTION WITH DIAPH2</scope>
</reference>
<reference key="6">
    <citation type="journal article" date="2006" name="Biochem. Biophys. Res. Commun.">
        <title>Multiple Rho proteins regulate the subcellular targeting of PAK5.</title>
        <authorList>
            <person name="Wu X."/>
            <person name="Frost J.A."/>
        </authorList>
    </citation>
    <scope>INTERACTION WITH PAK5</scope>
</reference>
<reference key="7">
    <citation type="journal article" date="2008" name="Proc. Natl. Acad. Sci. U.S.A.">
        <title>A quantitative atlas of mitotic phosphorylation.</title>
        <authorList>
            <person name="Dephoure N."/>
            <person name="Zhou C."/>
            <person name="Villen J."/>
            <person name="Beausoleil S.A."/>
            <person name="Bakalarski C.E."/>
            <person name="Elledge S.J."/>
            <person name="Gygi S.P."/>
        </authorList>
    </citation>
    <scope>IDENTIFICATION BY MASS SPECTROMETRY [LARGE SCALE ANALYSIS]</scope>
    <source>
        <tissue>Cervix carcinoma</tissue>
    </source>
</reference>
<reference key="8">
    <citation type="journal article" date="2012" name="Mol. Biol. Cell">
        <title>RhoD regulates cytoskeletal dynamics via the actin nucleation-promoting factor WASp homologue associated with actin Golgi membranes and microtubules.</title>
        <authorList>
            <person name="Gad A.K."/>
            <person name="Nehru V."/>
            <person name="Ruusala A."/>
            <person name="Aspenstrom P."/>
        </authorList>
    </citation>
    <scope>FUNCTION IN REGULATION OF ACTIN CYTOSKELETON REORGANIZATION</scope>
    <scope>INTERACTION WITH FILIP1</scope>
</reference>
<reference key="9">
    <citation type="journal article" date="2013" name="Biochem. Biophys. Res. Commun.">
        <title>Interaction of RhoD and ZIP kinase modulates actin filament assembly and focal adhesion dynamics.</title>
        <authorList>
            <person name="Nehru V."/>
            <person name="Almeida F.N."/>
            <person name="Aspenstrom P."/>
        </authorList>
    </citation>
    <scope>FUNCTION IN REGULATION OF ACTIN CYTOSKELETON REORGANIZATION</scope>
    <scope>INTERACTION WITH DAPK3</scope>
    <scope>MUTAGENESIS OF CYS-207</scope>
</reference>
<reference key="10">
    <citation type="journal article" date="2013" name="Traffic">
        <title>RhoD binds the Rab5 effector Rabankyrin-5 and has a role in trafficking of the platelet-derived growth factor receptor.</title>
        <authorList>
            <person name="Nehru V."/>
            <person name="Voytyuk O."/>
            <person name="Lennartsson J."/>
            <person name="Aspenstroem P."/>
        </authorList>
    </citation>
    <scope>FUNCTION IN ENDOSOMAL TRAFFICKING AND RECEPTOR INTERNALIZATION</scope>
    <scope>INTERACTION WITH ANKFY1</scope>
    <scope>SUBCELLULAR LOCATION</scope>
</reference>
<evidence type="ECO:0000250" key="1"/>
<evidence type="ECO:0000250" key="2">
    <source>
        <dbReference type="UniProtKB" id="P97348"/>
    </source>
</evidence>
<evidence type="ECO:0000255" key="3"/>
<evidence type="ECO:0000269" key="4">
    <source>
    </source>
</evidence>
<evidence type="ECO:0000269" key="5">
    <source>
    </source>
</evidence>
<evidence type="ECO:0000269" key="6">
    <source>
    </source>
</evidence>
<evidence type="ECO:0000269" key="7">
    <source>
    </source>
</evidence>
<evidence type="ECO:0000269" key="8">
    <source>
    </source>
</evidence>
<evidence type="ECO:0000305" key="9"/>
<evidence type="ECO:0000312" key="10">
    <source>
        <dbReference type="HGNC" id="HGNC:670"/>
    </source>
</evidence>
<evidence type="ECO:0007829" key="11">
    <source>
        <dbReference type="PDB" id="2J1L"/>
    </source>
</evidence>
<evidence type="ECO:0007829" key="12">
    <source>
        <dbReference type="PDB" id="7KDC"/>
    </source>
</evidence>
<dbReference type="EMBL" id="D85815">
    <property type="protein sequence ID" value="BAA19652.1"/>
    <property type="molecule type" value="Genomic_DNA"/>
</dbReference>
<dbReference type="EMBL" id="AF498973">
    <property type="protein sequence ID" value="AAM21120.1"/>
    <property type="molecule type" value="mRNA"/>
</dbReference>
<dbReference type="EMBL" id="AP000729">
    <property type="status" value="NOT_ANNOTATED_CDS"/>
    <property type="molecule type" value="Genomic_DNA"/>
</dbReference>
<dbReference type="EMBL" id="BC001338">
    <property type="protein sequence ID" value="AAH01338.1"/>
    <property type="molecule type" value="mRNA"/>
</dbReference>
<dbReference type="CCDS" id="CCDS8155.1"/>
<dbReference type="RefSeq" id="NP_055393.1">
    <property type="nucleotide sequence ID" value="NM_014578.4"/>
</dbReference>
<dbReference type="PDB" id="2J1L">
    <property type="method" value="X-ray"/>
    <property type="resolution" value="2.50 A"/>
    <property type="chains" value="A=7-197"/>
</dbReference>
<dbReference type="PDB" id="7KDC">
    <property type="method" value="X-ray"/>
    <property type="resolution" value="3.10 A"/>
    <property type="chains" value="A/B=8-194"/>
</dbReference>
<dbReference type="PDBsum" id="2J1L"/>
<dbReference type="PDBsum" id="7KDC"/>
<dbReference type="SMR" id="O00212"/>
<dbReference type="BioGRID" id="119010">
    <property type="interactions" value="570"/>
</dbReference>
<dbReference type="CORUM" id="O00212"/>
<dbReference type="FunCoup" id="O00212">
    <property type="interactions" value="336"/>
</dbReference>
<dbReference type="IntAct" id="O00212">
    <property type="interactions" value="20"/>
</dbReference>
<dbReference type="STRING" id="9606.ENSP00000308576"/>
<dbReference type="iPTMnet" id="O00212"/>
<dbReference type="PhosphoSitePlus" id="O00212"/>
<dbReference type="SwissPalm" id="O00212"/>
<dbReference type="BioMuta" id="RHOD"/>
<dbReference type="jPOST" id="O00212"/>
<dbReference type="MassIVE" id="O00212"/>
<dbReference type="PaxDb" id="9606-ENSP00000308576"/>
<dbReference type="PeptideAtlas" id="O00212"/>
<dbReference type="ProteomicsDB" id="47782"/>
<dbReference type="Pumba" id="O00212"/>
<dbReference type="Antibodypedia" id="16425">
    <property type="antibodies" value="227 antibodies from 28 providers"/>
</dbReference>
<dbReference type="DNASU" id="29984"/>
<dbReference type="Ensembl" id="ENST00000308831.7">
    <property type="protein sequence ID" value="ENSP00000308576.2"/>
    <property type="gene ID" value="ENSG00000173156.7"/>
</dbReference>
<dbReference type="GeneID" id="29984"/>
<dbReference type="KEGG" id="hsa:29984"/>
<dbReference type="MANE-Select" id="ENST00000308831.7">
    <property type="protein sequence ID" value="ENSP00000308576.2"/>
    <property type="RefSeq nucleotide sequence ID" value="NM_014578.4"/>
    <property type="RefSeq protein sequence ID" value="NP_055393.1"/>
</dbReference>
<dbReference type="UCSC" id="uc001ojv.4">
    <property type="organism name" value="human"/>
</dbReference>
<dbReference type="AGR" id="HGNC:670"/>
<dbReference type="CTD" id="29984"/>
<dbReference type="DisGeNET" id="29984"/>
<dbReference type="GeneCards" id="RHOD"/>
<dbReference type="HGNC" id="HGNC:670">
    <property type="gene designation" value="RHOD"/>
</dbReference>
<dbReference type="HPA" id="ENSG00000173156">
    <property type="expression patterns" value="Tissue enhanced (esophagus, liver)"/>
</dbReference>
<dbReference type="MIM" id="605781">
    <property type="type" value="gene"/>
</dbReference>
<dbReference type="neXtProt" id="NX_O00212"/>
<dbReference type="OpenTargets" id="ENSG00000173156"/>
<dbReference type="PharmGKB" id="PA24952"/>
<dbReference type="VEuPathDB" id="HostDB:ENSG00000173156"/>
<dbReference type="eggNOG" id="KOG0393">
    <property type="taxonomic scope" value="Eukaryota"/>
</dbReference>
<dbReference type="GeneTree" id="ENSGT00940000161731"/>
<dbReference type="HOGENOM" id="CLU_041217_21_2_1"/>
<dbReference type="InParanoid" id="O00212"/>
<dbReference type="OMA" id="VHISLWD"/>
<dbReference type="OrthoDB" id="8830751at2759"/>
<dbReference type="PAN-GO" id="O00212">
    <property type="GO annotations" value="14 GO annotations based on evolutionary models"/>
</dbReference>
<dbReference type="PhylomeDB" id="O00212"/>
<dbReference type="TreeFam" id="TF331746"/>
<dbReference type="PathwayCommons" id="O00212"/>
<dbReference type="Reactome" id="R-HSA-5663220">
    <property type="pathway name" value="RHO GTPases Activate Formins"/>
</dbReference>
<dbReference type="Reactome" id="R-HSA-9013405">
    <property type="pathway name" value="RHOD GTPase cycle"/>
</dbReference>
<dbReference type="SignaLink" id="O00212"/>
<dbReference type="BioGRID-ORCS" id="29984">
    <property type="hits" value="21 hits in 1149 CRISPR screens"/>
</dbReference>
<dbReference type="ChiTaRS" id="RHOD">
    <property type="organism name" value="human"/>
</dbReference>
<dbReference type="EvolutionaryTrace" id="O00212"/>
<dbReference type="GeneWiki" id="RhoD"/>
<dbReference type="GenomeRNAi" id="29984"/>
<dbReference type="Pharos" id="O00212">
    <property type="development level" value="Tbio"/>
</dbReference>
<dbReference type="PRO" id="PR:O00212"/>
<dbReference type="Proteomes" id="UP000005640">
    <property type="component" value="Chromosome 11"/>
</dbReference>
<dbReference type="RNAct" id="O00212">
    <property type="molecule type" value="protein"/>
</dbReference>
<dbReference type="Bgee" id="ENSG00000173156">
    <property type="expression patterns" value="Expressed in lower esophagus mucosa and 153 other cell types or tissues"/>
</dbReference>
<dbReference type="ExpressionAtlas" id="O00212">
    <property type="expression patterns" value="baseline and differential"/>
</dbReference>
<dbReference type="GO" id="GO:0042995">
    <property type="term" value="C:cell projection"/>
    <property type="evidence" value="ECO:0007669"/>
    <property type="project" value="Ensembl"/>
</dbReference>
<dbReference type="GO" id="GO:0005829">
    <property type="term" value="C:cytosol"/>
    <property type="evidence" value="ECO:0000304"/>
    <property type="project" value="Reactome"/>
</dbReference>
<dbReference type="GO" id="GO:0005769">
    <property type="term" value="C:early endosome"/>
    <property type="evidence" value="ECO:0007669"/>
    <property type="project" value="UniProtKB-SubCell"/>
</dbReference>
<dbReference type="GO" id="GO:0010008">
    <property type="term" value="C:endosome membrane"/>
    <property type="evidence" value="ECO:0000304"/>
    <property type="project" value="Reactome"/>
</dbReference>
<dbReference type="GO" id="GO:0000139">
    <property type="term" value="C:Golgi membrane"/>
    <property type="evidence" value="ECO:0000304"/>
    <property type="project" value="Reactome"/>
</dbReference>
<dbReference type="GO" id="GO:0005741">
    <property type="term" value="C:mitochondrial outer membrane"/>
    <property type="evidence" value="ECO:0000304"/>
    <property type="project" value="Reactome"/>
</dbReference>
<dbReference type="GO" id="GO:0005886">
    <property type="term" value="C:plasma membrane"/>
    <property type="evidence" value="ECO:0000304"/>
    <property type="project" value="Reactome"/>
</dbReference>
<dbReference type="GO" id="GO:0005525">
    <property type="term" value="F:GTP binding"/>
    <property type="evidence" value="ECO:0007669"/>
    <property type="project" value="UniProtKB-KW"/>
</dbReference>
<dbReference type="GO" id="GO:0003924">
    <property type="term" value="F:GTPase activity"/>
    <property type="evidence" value="ECO:0000304"/>
    <property type="project" value="ProtInc"/>
</dbReference>
<dbReference type="GO" id="GO:0005085">
    <property type="term" value="F:guanyl-nucleotide exchange factor activity"/>
    <property type="evidence" value="ECO:0000304"/>
    <property type="project" value="Reactome"/>
</dbReference>
<dbReference type="GO" id="GO:0019901">
    <property type="term" value="F:protein kinase binding"/>
    <property type="evidence" value="ECO:0007669"/>
    <property type="project" value="Ensembl"/>
</dbReference>
<dbReference type="GO" id="GO:0051017">
    <property type="term" value="P:actin filament bundle assembly"/>
    <property type="evidence" value="ECO:0000315"/>
    <property type="project" value="UniProtKB"/>
</dbReference>
<dbReference type="GO" id="GO:0030041">
    <property type="term" value="P:actin filament polymerization"/>
    <property type="evidence" value="ECO:0007669"/>
    <property type="project" value="Ensembl"/>
</dbReference>
<dbReference type="GO" id="GO:0008543">
    <property type="term" value="P:fibroblast growth factor receptor signaling pathway"/>
    <property type="evidence" value="ECO:0007669"/>
    <property type="project" value="Ensembl"/>
</dbReference>
<dbReference type="GO" id="GO:0048041">
    <property type="term" value="P:focal adhesion assembly"/>
    <property type="evidence" value="ECO:0000315"/>
    <property type="project" value="UniProtKB"/>
</dbReference>
<dbReference type="GO" id="GO:0030032">
    <property type="term" value="P:lamellipodium assembly"/>
    <property type="evidence" value="ECO:0000315"/>
    <property type="project" value="UniProtKB"/>
</dbReference>
<dbReference type="GO" id="GO:0045785">
    <property type="term" value="P:positive regulation of cell adhesion"/>
    <property type="evidence" value="ECO:0000315"/>
    <property type="project" value="UniProtKB"/>
</dbReference>
<dbReference type="GO" id="GO:0030335">
    <property type="term" value="P:positive regulation of cell migration"/>
    <property type="evidence" value="ECO:0000315"/>
    <property type="project" value="UniProtKB"/>
</dbReference>
<dbReference type="GO" id="GO:0006605">
    <property type="term" value="P:protein targeting"/>
    <property type="evidence" value="ECO:0007669"/>
    <property type="project" value="Ensembl"/>
</dbReference>
<dbReference type="GO" id="GO:0032956">
    <property type="term" value="P:regulation of actin cytoskeleton organization"/>
    <property type="evidence" value="ECO:0007669"/>
    <property type="project" value="Ensembl"/>
</dbReference>
<dbReference type="GO" id="GO:0051893">
    <property type="term" value="P:regulation of focal adhesion assembly"/>
    <property type="evidence" value="ECO:0007669"/>
    <property type="project" value="Ensembl"/>
</dbReference>
<dbReference type="GO" id="GO:0051056">
    <property type="term" value="P:regulation of small GTPase mediated signal transduction"/>
    <property type="evidence" value="ECO:0000304"/>
    <property type="project" value="Reactome"/>
</dbReference>
<dbReference type="GO" id="GO:0007266">
    <property type="term" value="P:Rho protein signal transduction"/>
    <property type="evidence" value="ECO:0000304"/>
    <property type="project" value="ProtInc"/>
</dbReference>
<dbReference type="CDD" id="cd04132">
    <property type="entry name" value="Rho4_like"/>
    <property type="match status" value="1"/>
</dbReference>
<dbReference type="FunFam" id="3.40.50.300:FF:000676">
    <property type="entry name" value="Ras homolog family member F"/>
    <property type="match status" value="1"/>
</dbReference>
<dbReference type="Gene3D" id="3.40.50.300">
    <property type="entry name" value="P-loop containing nucleotide triphosphate hydrolases"/>
    <property type="match status" value="1"/>
</dbReference>
<dbReference type="InterPro" id="IPR027417">
    <property type="entry name" value="P-loop_NTPase"/>
</dbReference>
<dbReference type="InterPro" id="IPR005225">
    <property type="entry name" value="Small_GTP-bd"/>
</dbReference>
<dbReference type="InterPro" id="IPR001806">
    <property type="entry name" value="Small_GTPase"/>
</dbReference>
<dbReference type="InterPro" id="IPR003578">
    <property type="entry name" value="Small_GTPase_Rho"/>
</dbReference>
<dbReference type="NCBIfam" id="TIGR00231">
    <property type="entry name" value="small_GTP"/>
    <property type="match status" value="1"/>
</dbReference>
<dbReference type="PANTHER" id="PTHR24072">
    <property type="entry name" value="RHO FAMILY GTPASE"/>
    <property type="match status" value="1"/>
</dbReference>
<dbReference type="Pfam" id="PF00071">
    <property type="entry name" value="Ras"/>
    <property type="match status" value="1"/>
</dbReference>
<dbReference type="PRINTS" id="PR00449">
    <property type="entry name" value="RASTRNSFRMNG"/>
</dbReference>
<dbReference type="SMART" id="SM00175">
    <property type="entry name" value="RAB"/>
    <property type="match status" value="1"/>
</dbReference>
<dbReference type="SMART" id="SM00176">
    <property type="entry name" value="RAN"/>
    <property type="match status" value="1"/>
</dbReference>
<dbReference type="SMART" id="SM00173">
    <property type="entry name" value="RAS"/>
    <property type="match status" value="1"/>
</dbReference>
<dbReference type="SMART" id="SM00174">
    <property type="entry name" value="RHO"/>
    <property type="match status" value="1"/>
</dbReference>
<dbReference type="SUPFAM" id="SSF52540">
    <property type="entry name" value="P-loop containing nucleoside triphosphate hydrolases"/>
    <property type="match status" value="1"/>
</dbReference>